<proteinExistence type="inferred from homology"/>
<evidence type="ECO:0000255" key="1">
    <source>
        <dbReference type="HAMAP-Rule" id="MF_01542"/>
    </source>
</evidence>
<accession>Q2FZV9</accession>
<sequence length="78" mass="8657">MNPIVEFCLSNMAKGGDYVFNQLENDPDVDVLEYGCLTHCGICSAGLYALVNGDIVEGDSPEELLQNIYAHIKETWIF</sequence>
<reference key="1">
    <citation type="book" date="2006" name="Gram positive pathogens, 2nd edition">
        <title>The Staphylococcus aureus NCTC 8325 genome.</title>
        <editorList>
            <person name="Fischetti V."/>
            <person name="Novick R."/>
            <person name="Ferretti J."/>
            <person name="Portnoy D."/>
            <person name="Rood J."/>
        </editorList>
        <authorList>
            <person name="Gillaspy A.F."/>
            <person name="Worrell V."/>
            <person name="Orvis J."/>
            <person name="Roe B.A."/>
            <person name="Dyer D.W."/>
            <person name="Iandolo J.J."/>
        </authorList>
    </citation>
    <scope>NUCLEOTIDE SEQUENCE [LARGE SCALE GENOMIC DNA]</scope>
    <source>
        <strain>NCTC 8325 / PS 47</strain>
    </source>
</reference>
<feature type="chain" id="PRO_0000300206" description="UPF0349 protein SAOUHSC_00876">
    <location>
        <begin position="1"/>
        <end position="78"/>
    </location>
</feature>
<organism>
    <name type="scientific">Staphylococcus aureus (strain NCTC 8325 / PS 47)</name>
    <dbReference type="NCBI Taxonomy" id="93061"/>
    <lineage>
        <taxon>Bacteria</taxon>
        <taxon>Bacillati</taxon>
        <taxon>Bacillota</taxon>
        <taxon>Bacilli</taxon>
        <taxon>Bacillales</taxon>
        <taxon>Staphylococcaceae</taxon>
        <taxon>Staphylococcus</taxon>
    </lineage>
</organism>
<protein>
    <recommendedName>
        <fullName evidence="1">UPF0349 protein SAOUHSC_00876</fullName>
    </recommendedName>
</protein>
<gene>
    <name type="ordered locus">SAOUHSC_00876</name>
</gene>
<dbReference type="EMBL" id="CP000253">
    <property type="protein sequence ID" value="ABD30001.1"/>
    <property type="molecule type" value="Genomic_DNA"/>
</dbReference>
<dbReference type="RefSeq" id="WP_001068337.1">
    <property type="nucleotide sequence ID" value="NZ_LS483365.1"/>
</dbReference>
<dbReference type="RefSeq" id="YP_499429.1">
    <property type="nucleotide sequence ID" value="NC_007795.1"/>
</dbReference>
<dbReference type="SMR" id="Q2FZV9"/>
<dbReference type="STRING" id="93061.SAOUHSC_00876"/>
<dbReference type="PaxDb" id="1280-SAXN108_0934"/>
<dbReference type="GeneID" id="3919223"/>
<dbReference type="KEGG" id="sao:SAOUHSC_00876"/>
<dbReference type="PATRIC" id="fig|93061.5.peg.796"/>
<dbReference type="eggNOG" id="COG4844">
    <property type="taxonomic scope" value="Bacteria"/>
</dbReference>
<dbReference type="HOGENOM" id="CLU_182025_0_0_9"/>
<dbReference type="OrthoDB" id="1684419at2"/>
<dbReference type="PRO" id="PR:Q2FZV9"/>
<dbReference type="Proteomes" id="UP000008816">
    <property type="component" value="Chromosome"/>
</dbReference>
<dbReference type="HAMAP" id="MF_01542">
    <property type="entry name" value="UPF0349"/>
    <property type="match status" value="1"/>
</dbReference>
<dbReference type="InterPro" id="IPR009910">
    <property type="entry name" value="DUF1450"/>
</dbReference>
<dbReference type="InterPro" id="IPR022916">
    <property type="entry name" value="UPF0349"/>
</dbReference>
<dbReference type="NCBIfam" id="NF010190">
    <property type="entry name" value="PRK13669.1"/>
    <property type="match status" value="1"/>
</dbReference>
<dbReference type="Pfam" id="PF07293">
    <property type="entry name" value="DUF1450"/>
    <property type="match status" value="1"/>
</dbReference>
<name>Y876_STAA8</name>
<comment type="similarity">
    <text evidence="1">Belongs to the UPF0349 family.</text>
</comment>
<keyword id="KW-1185">Reference proteome</keyword>